<reference key="1">
    <citation type="journal article" date="2002" name="Proc. Natl. Acad. Sci. U.S.A.">
        <title>Genome sequence of Streptococcus mutans UA159, a cariogenic dental pathogen.</title>
        <authorList>
            <person name="Ajdic D.J."/>
            <person name="McShan W.M."/>
            <person name="McLaughlin R.E."/>
            <person name="Savic G."/>
            <person name="Chang J."/>
            <person name="Carson M.B."/>
            <person name="Primeaux C."/>
            <person name="Tian R."/>
            <person name="Kenton S."/>
            <person name="Jia H.G."/>
            <person name="Lin S.P."/>
            <person name="Qian Y."/>
            <person name="Li S."/>
            <person name="Zhu H."/>
            <person name="Najar F.Z."/>
            <person name="Lai H."/>
            <person name="White J."/>
            <person name="Roe B.A."/>
            <person name="Ferretti J.J."/>
        </authorList>
    </citation>
    <scope>NUCLEOTIDE SEQUENCE [LARGE SCALE GENOMIC DNA]</scope>
    <source>
        <strain>ATCC 700610 / UA159</strain>
    </source>
</reference>
<reference key="2">
    <citation type="submission" date="1996-10" db="EMBL/GenBank/DDBJ databases">
        <authorList>
            <person name="Peruzzi F."/>
            <person name="Piggot P.J."/>
            <person name="Daneo-Moore L."/>
        </authorList>
    </citation>
    <scope>NUCLEOTIDE SEQUENCE [GENOMIC DNA] OF 1-106</scope>
    <source>
        <strain>GS-5</strain>
    </source>
</reference>
<organism>
    <name type="scientific">Streptococcus mutans serotype c (strain ATCC 700610 / UA159)</name>
    <dbReference type="NCBI Taxonomy" id="210007"/>
    <lineage>
        <taxon>Bacteria</taxon>
        <taxon>Bacillati</taxon>
        <taxon>Bacillota</taxon>
        <taxon>Bacilli</taxon>
        <taxon>Lactobacillales</taxon>
        <taxon>Streptococcaceae</taxon>
        <taxon>Streptococcus</taxon>
    </lineage>
</organism>
<comment type="function">
    <text evidence="1">Involved in the gluconeogenesis. Catalyzes stereospecifically the conversion of dihydroxyacetone phosphate (DHAP) to D-glyceraldehyde-3-phosphate (G3P).</text>
</comment>
<comment type="catalytic activity">
    <reaction evidence="1">
        <text>D-glyceraldehyde 3-phosphate = dihydroxyacetone phosphate</text>
        <dbReference type="Rhea" id="RHEA:18585"/>
        <dbReference type="ChEBI" id="CHEBI:57642"/>
        <dbReference type="ChEBI" id="CHEBI:59776"/>
        <dbReference type="EC" id="5.3.1.1"/>
    </reaction>
</comment>
<comment type="pathway">
    <text evidence="1">Carbohydrate biosynthesis; gluconeogenesis.</text>
</comment>
<comment type="pathway">
    <text evidence="1">Carbohydrate degradation; glycolysis; D-glyceraldehyde 3-phosphate from glycerone phosphate: step 1/1.</text>
</comment>
<comment type="subunit">
    <text evidence="1">Homodimer.</text>
</comment>
<comment type="subcellular location">
    <subcellularLocation>
        <location evidence="1">Cytoplasm</location>
    </subcellularLocation>
</comment>
<comment type="similarity">
    <text evidence="1">Belongs to the triosephosphate isomerase family.</text>
</comment>
<dbReference type="EC" id="5.3.1.1" evidence="1"/>
<dbReference type="EMBL" id="AE014133">
    <property type="protein sequence ID" value="AAN58444.1"/>
    <property type="molecule type" value="Genomic_DNA"/>
</dbReference>
<dbReference type="EMBL" id="U75482">
    <property type="protein sequence ID" value="AAB41199.1"/>
    <property type="molecule type" value="Genomic_DNA"/>
</dbReference>
<dbReference type="RefSeq" id="NP_721138.1">
    <property type="nucleotide sequence ID" value="NC_004350.2"/>
</dbReference>
<dbReference type="RefSeq" id="WP_002263313.1">
    <property type="nucleotide sequence ID" value="NC_004350.2"/>
</dbReference>
<dbReference type="SMR" id="P72484"/>
<dbReference type="STRING" id="210007.SMU_715"/>
<dbReference type="GeneID" id="93859735"/>
<dbReference type="KEGG" id="smu:SMU_715"/>
<dbReference type="PATRIC" id="fig|210007.7.peg.634"/>
<dbReference type="eggNOG" id="COG0149">
    <property type="taxonomic scope" value="Bacteria"/>
</dbReference>
<dbReference type="HOGENOM" id="CLU_024251_2_3_9"/>
<dbReference type="OrthoDB" id="9809429at2"/>
<dbReference type="PhylomeDB" id="P72484"/>
<dbReference type="UniPathway" id="UPA00109">
    <property type="reaction ID" value="UER00189"/>
</dbReference>
<dbReference type="UniPathway" id="UPA00138"/>
<dbReference type="Proteomes" id="UP000002512">
    <property type="component" value="Chromosome"/>
</dbReference>
<dbReference type="GO" id="GO:0005829">
    <property type="term" value="C:cytosol"/>
    <property type="evidence" value="ECO:0007669"/>
    <property type="project" value="TreeGrafter"/>
</dbReference>
<dbReference type="GO" id="GO:0004807">
    <property type="term" value="F:triose-phosphate isomerase activity"/>
    <property type="evidence" value="ECO:0007669"/>
    <property type="project" value="UniProtKB-UniRule"/>
</dbReference>
<dbReference type="GO" id="GO:0006094">
    <property type="term" value="P:gluconeogenesis"/>
    <property type="evidence" value="ECO:0007669"/>
    <property type="project" value="UniProtKB-UniRule"/>
</dbReference>
<dbReference type="GO" id="GO:0046166">
    <property type="term" value="P:glyceraldehyde-3-phosphate biosynthetic process"/>
    <property type="evidence" value="ECO:0007669"/>
    <property type="project" value="TreeGrafter"/>
</dbReference>
<dbReference type="GO" id="GO:0019563">
    <property type="term" value="P:glycerol catabolic process"/>
    <property type="evidence" value="ECO:0007669"/>
    <property type="project" value="TreeGrafter"/>
</dbReference>
<dbReference type="GO" id="GO:0006096">
    <property type="term" value="P:glycolytic process"/>
    <property type="evidence" value="ECO:0007669"/>
    <property type="project" value="UniProtKB-UniRule"/>
</dbReference>
<dbReference type="CDD" id="cd00311">
    <property type="entry name" value="TIM"/>
    <property type="match status" value="1"/>
</dbReference>
<dbReference type="FunFam" id="3.20.20.70:FF:000016">
    <property type="entry name" value="Triosephosphate isomerase"/>
    <property type="match status" value="1"/>
</dbReference>
<dbReference type="Gene3D" id="3.20.20.70">
    <property type="entry name" value="Aldolase class I"/>
    <property type="match status" value="1"/>
</dbReference>
<dbReference type="HAMAP" id="MF_00147_B">
    <property type="entry name" value="TIM_B"/>
    <property type="match status" value="1"/>
</dbReference>
<dbReference type="InterPro" id="IPR013785">
    <property type="entry name" value="Aldolase_TIM"/>
</dbReference>
<dbReference type="InterPro" id="IPR035990">
    <property type="entry name" value="TIM_sf"/>
</dbReference>
<dbReference type="InterPro" id="IPR022896">
    <property type="entry name" value="TrioseP_Isoase_bac/euk"/>
</dbReference>
<dbReference type="InterPro" id="IPR000652">
    <property type="entry name" value="Triosephosphate_isomerase"/>
</dbReference>
<dbReference type="InterPro" id="IPR020861">
    <property type="entry name" value="Triosephosphate_isomerase_AS"/>
</dbReference>
<dbReference type="NCBIfam" id="TIGR00419">
    <property type="entry name" value="tim"/>
    <property type="match status" value="1"/>
</dbReference>
<dbReference type="PANTHER" id="PTHR21139">
    <property type="entry name" value="TRIOSEPHOSPHATE ISOMERASE"/>
    <property type="match status" value="1"/>
</dbReference>
<dbReference type="PANTHER" id="PTHR21139:SF42">
    <property type="entry name" value="TRIOSEPHOSPHATE ISOMERASE"/>
    <property type="match status" value="1"/>
</dbReference>
<dbReference type="Pfam" id="PF00121">
    <property type="entry name" value="TIM"/>
    <property type="match status" value="1"/>
</dbReference>
<dbReference type="SUPFAM" id="SSF51351">
    <property type="entry name" value="Triosephosphate isomerase (TIM)"/>
    <property type="match status" value="1"/>
</dbReference>
<dbReference type="PROSITE" id="PS00171">
    <property type="entry name" value="TIM_1"/>
    <property type="match status" value="1"/>
</dbReference>
<dbReference type="PROSITE" id="PS51440">
    <property type="entry name" value="TIM_2"/>
    <property type="match status" value="1"/>
</dbReference>
<name>TPIS_STRMU</name>
<gene>
    <name evidence="1" type="primary">tpiA</name>
    <name type="synonym">tpi</name>
    <name type="ordered locus">SMU_715</name>
</gene>
<feature type="chain" id="PRO_0000090296" description="Triosephosphate isomerase">
    <location>
        <begin position="1"/>
        <end position="252"/>
    </location>
</feature>
<feature type="active site" description="Electrophile" evidence="1">
    <location>
        <position position="96"/>
    </location>
</feature>
<feature type="active site" description="Proton acceptor" evidence="1">
    <location>
        <position position="168"/>
    </location>
</feature>
<feature type="binding site" evidence="1">
    <location>
        <begin position="10"/>
        <end position="12"/>
    </location>
    <ligand>
        <name>substrate</name>
    </ligand>
</feature>
<feature type="binding site" evidence="1">
    <location>
        <position position="174"/>
    </location>
    <ligand>
        <name>substrate</name>
    </ligand>
</feature>
<feature type="binding site" evidence="1">
    <location>
        <position position="214"/>
    </location>
    <ligand>
        <name>substrate</name>
    </ligand>
</feature>
<feature type="binding site" evidence="1">
    <location>
        <begin position="235"/>
        <end position="236"/>
    </location>
    <ligand>
        <name>substrate</name>
    </ligand>
</feature>
<feature type="sequence conflict" description="In Ref. 2; AAB41199." evidence="2" ref="2">
    <original>G</original>
    <variation>D</variation>
    <location>
        <position position="57"/>
    </location>
</feature>
<sequence>MSRKPIIAGNWKMNKTAAEAREFIDAVKNNIPSNNLVDTVIGSPALFLEGMKKGVKGTELQVAAQNCYWEDFGAFTGETSPAALAALGVDYVIIGHSERRDYFHETDQEINKKAHAIFKHKMTPILCCGESLETYEAGKTAEWIEGQITADLKGLSAEQVSSMVIAYEPIWAIGTGKSADANIADDICGVVRATVEKLYGKEVAQAVRIQYGGSVKPENVAEYMAKENVDGALVGGASLQADSFLALLDFVK</sequence>
<accession>P72484</accession>
<proteinExistence type="inferred from homology"/>
<evidence type="ECO:0000255" key="1">
    <source>
        <dbReference type="HAMAP-Rule" id="MF_00147"/>
    </source>
</evidence>
<evidence type="ECO:0000305" key="2"/>
<keyword id="KW-0963">Cytoplasm</keyword>
<keyword id="KW-0312">Gluconeogenesis</keyword>
<keyword id="KW-0324">Glycolysis</keyword>
<keyword id="KW-0413">Isomerase</keyword>
<keyword id="KW-1185">Reference proteome</keyword>
<protein>
    <recommendedName>
        <fullName evidence="1">Triosephosphate isomerase</fullName>
        <shortName evidence="1">TIM</shortName>
        <shortName evidence="1">TPI</shortName>
        <ecNumber evidence="1">5.3.1.1</ecNumber>
    </recommendedName>
    <alternativeName>
        <fullName evidence="1">Triose-phosphate isomerase</fullName>
    </alternativeName>
</protein>